<feature type="chain" id="PRO_0000069470" description="Galanin receptor type 3">
    <location>
        <begin position="1"/>
        <end position="370"/>
    </location>
</feature>
<feature type="topological domain" description="Extracellular" evidence="3">
    <location>
        <begin position="1"/>
        <end position="20"/>
    </location>
</feature>
<feature type="transmembrane region" description="Helical; Name=1" evidence="3">
    <location>
        <begin position="21"/>
        <end position="41"/>
    </location>
</feature>
<feature type="topological domain" description="Cytoplasmic" evidence="3">
    <location>
        <begin position="42"/>
        <end position="57"/>
    </location>
</feature>
<feature type="transmembrane region" description="Helical; Name=2" evidence="3">
    <location>
        <begin position="58"/>
        <end position="78"/>
    </location>
</feature>
<feature type="topological domain" description="Extracellular" evidence="3">
    <location>
        <begin position="79"/>
        <end position="96"/>
    </location>
</feature>
<feature type="transmembrane region" description="Helical; Name=3" evidence="3">
    <location>
        <begin position="97"/>
        <end position="118"/>
    </location>
</feature>
<feature type="topological domain" description="Cytoplasmic" evidence="3">
    <location>
        <begin position="119"/>
        <end position="138"/>
    </location>
</feature>
<feature type="transmembrane region" description="Helical; Name=4" evidence="3">
    <location>
        <begin position="139"/>
        <end position="159"/>
    </location>
</feature>
<feature type="topological domain" description="Extracellular" evidence="3">
    <location>
        <begin position="160"/>
        <end position="184"/>
    </location>
</feature>
<feature type="transmembrane region" description="Helical; Name=5" evidence="3">
    <location>
        <begin position="185"/>
        <end position="205"/>
    </location>
</feature>
<feature type="topological domain" description="Cytoplasmic" evidence="3">
    <location>
        <begin position="206"/>
        <end position="236"/>
    </location>
</feature>
<feature type="transmembrane region" description="Helical; Name=6" evidence="3">
    <location>
        <begin position="237"/>
        <end position="257"/>
    </location>
</feature>
<feature type="topological domain" description="Extracellular" evidence="3">
    <location>
        <begin position="258"/>
        <end position="259"/>
    </location>
</feature>
<feature type="transmembrane region" description="Helical; Name=7" evidence="3">
    <location>
        <begin position="260"/>
        <end position="280"/>
    </location>
</feature>
<feature type="topological domain" description="Cytoplasmic" evidence="3">
    <location>
        <begin position="281"/>
        <end position="370"/>
    </location>
</feature>
<feature type="region of interest" description="Disordered" evidence="5">
    <location>
        <begin position="328"/>
        <end position="370"/>
    </location>
</feature>
<feature type="compositionally biased region" description="Basic and acidic residues" evidence="5">
    <location>
        <begin position="350"/>
        <end position="359"/>
    </location>
</feature>
<feature type="lipid moiety-binding region" description="S-palmitoyl cysteine" evidence="1">
    <location>
        <position position="308"/>
    </location>
</feature>
<feature type="glycosylation site" description="N-linked (GlcNAc...) asparagine" evidence="3">
    <location>
        <position position="6"/>
    </location>
</feature>
<feature type="disulfide bond" evidence="4">
    <location>
        <begin position="95"/>
        <end position="172"/>
    </location>
</feature>
<feature type="sequence conflict" description="In Ref. 1; AAC36588 and 3; AAI31951/AAI31953." evidence="6" ref="1 3">
    <original>T</original>
    <variation>A</variation>
    <location>
        <position position="239"/>
    </location>
</feature>
<proteinExistence type="evidence at transcript level"/>
<protein>
    <recommendedName>
        <fullName>Galanin receptor type 3</fullName>
        <shortName>GAL3-R</shortName>
        <shortName>GALR-3</shortName>
    </recommendedName>
</protein>
<organism>
    <name type="scientific">Mus musculus</name>
    <name type="common">Mouse</name>
    <dbReference type="NCBI Taxonomy" id="10090"/>
    <lineage>
        <taxon>Eukaryota</taxon>
        <taxon>Metazoa</taxon>
        <taxon>Chordata</taxon>
        <taxon>Craniata</taxon>
        <taxon>Vertebrata</taxon>
        <taxon>Euteleostomi</taxon>
        <taxon>Mammalia</taxon>
        <taxon>Eutheria</taxon>
        <taxon>Euarchontoglires</taxon>
        <taxon>Glires</taxon>
        <taxon>Rodentia</taxon>
        <taxon>Myomorpha</taxon>
        <taxon>Muroidea</taxon>
        <taxon>Muridae</taxon>
        <taxon>Murinae</taxon>
        <taxon>Mus</taxon>
        <taxon>Mus</taxon>
    </lineage>
</organism>
<name>GALR3_MOUSE</name>
<accession>O88853</accession>
<accession>A2RS28</accession>
<accession>E9QPX7</accession>
<gene>
    <name type="primary">Galr3</name>
    <name type="synonym">Galnr3</name>
</gene>
<keyword id="KW-1003">Cell membrane</keyword>
<keyword id="KW-1015">Disulfide bond</keyword>
<keyword id="KW-0297">G-protein coupled receptor</keyword>
<keyword id="KW-0325">Glycoprotein</keyword>
<keyword id="KW-0449">Lipoprotein</keyword>
<keyword id="KW-0472">Membrane</keyword>
<keyword id="KW-0564">Palmitate</keyword>
<keyword id="KW-0675">Receptor</keyword>
<keyword id="KW-1185">Reference proteome</keyword>
<keyword id="KW-0807">Transducer</keyword>
<keyword id="KW-0812">Transmembrane</keyword>
<keyword id="KW-1133">Transmembrane helix</keyword>
<comment type="function">
    <text evidence="2">Receptor for the hormone galanin and spexin-1.</text>
</comment>
<comment type="subcellular location">
    <subcellularLocation>
        <location>Cell membrane</location>
        <topology>Multi-pass membrane protein</topology>
    </subcellularLocation>
</comment>
<comment type="similarity">
    <text evidence="4">Belongs to the G-protein coupled receptor 1 family.</text>
</comment>
<dbReference type="EMBL" id="AF042783">
    <property type="protein sequence ID" value="AAC36588.1"/>
    <property type="molecule type" value="Genomic_DNA"/>
</dbReference>
<dbReference type="EMBL" id="AL589670">
    <property type="status" value="NOT_ANNOTATED_CDS"/>
    <property type="molecule type" value="Genomic_DNA"/>
</dbReference>
<dbReference type="EMBL" id="BC131950">
    <property type="protein sequence ID" value="AAI31951.1"/>
    <property type="molecule type" value="mRNA"/>
</dbReference>
<dbReference type="EMBL" id="BC131952">
    <property type="protein sequence ID" value="AAI31953.1"/>
    <property type="molecule type" value="mRNA"/>
</dbReference>
<dbReference type="CCDS" id="CCDS27631.1"/>
<dbReference type="RefSeq" id="NP_056553.2">
    <property type="nucleotide sequence ID" value="NM_015738.2"/>
</dbReference>
<dbReference type="SMR" id="O88853"/>
<dbReference type="FunCoup" id="O88853">
    <property type="interactions" value="452"/>
</dbReference>
<dbReference type="STRING" id="10090.ENSMUSP00000060517"/>
<dbReference type="GlyCosmos" id="O88853">
    <property type="glycosylation" value="1 site, No reported glycans"/>
</dbReference>
<dbReference type="GlyGen" id="O88853">
    <property type="glycosylation" value="1 site"/>
</dbReference>
<dbReference type="iPTMnet" id="O88853"/>
<dbReference type="PhosphoSitePlus" id="O88853"/>
<dbReference type="Antibodypedia" id="12147">
    <property type="antibodies" value="248 antibodies from 32 providers"/>
</dbReference>
<dbReference type="DNASU" id="14429"/>
<dbReference type="Ensembl" id="ENSMUST00000058004.4">
    <property type="protein sequence ID" value="ENSMUSP00000060517.4"/>
    <property type="gene ID" value="ENSMUSG00000114755.2"/>
</dbReference>
<dbReference type="GeneID" id="14429"/>
<dbReference type="KEGG" id="mmu:14429"/>
<dbReference type="UCSC" id="uc007wsg.2">
    <property type="organism name" value="mouse"/>
</dbReference>
<dbReference type="AGR" id="MGI:1329003"/>
<dbReference type="CTD" id="8484"/>
<dbReference type="MGI" id="MGI:1329003">
    <property type="gene designation" value="Galr3"/>
</dbReference>
<dbReference type="VEuPathDB" id="HostDB:ENSMUSG00000114755"/>
<dbReference type="GeneTree" id="ENSGT01130000278263"/>
<dbReference type="HOGENOM" id="CLU_009579_6_4_1"/>
<dbReference type="InParanoid" id="O88853"/>
<dbReference type="OMA" id="YQIVHYH"/>
<dbReference type="OrthoDB" id="5964776at2759"/>
<dbReference type="Reactome" id="R-MMU-375276">
    <property type="pathway name" value="Peptide ligand-binding receptors"/>
</dbReference>
<dbReference type="Reactome" id="R-MMU-418594">
    <property type="pathway name" value="G alpha (i) signalling events"/>
</dbReference>
<dbReference type="BioGRID-ORCS" id="14429">
    <property type="hits" value="2 hits in 23 CRISPR screens"/>
</dbReference>
<dbReference type="ChiTaRS" id="Galr3">
    <property type="organism name" value="mouse"/>
</dbReference>
<dbReference type="PRO" id="PR:O88853"/>
<dbReference type="Proteomes" id="UP000000589">
    <property type="component" value="Chromosome 15"/>
</dbReference>
<dbReference type="RNAct" id="O88853">
    <property type="molecule type" value="protein"/>
</dbReference>
<dbReference type="Bgee" id="ENSMUSG00000114755">
    <property type="expression patterns" value="Expressed in CA3 field of hippocampus and 12 other cell types or tissues"/>
</dbReference>
<dbReference type="GO" id="GO:0005929">
    <property type="term" value="C:cilium"/>
    <property type="evidence" value="ECO:0000266"/>
    <property type="project" value="MGI"/>
</dbReference>
<dbReference type="GO" id="GO:0097730">
    <property type="term" value="C:non-motile cilium"/>
    <property type="evidence" value="ECO:0000314"/>
    <property type="project" value="MGI"/>
</dbReference>
<dbReference type="GO" id="GO:0005886">
    <property type="term" value="C:plasma membrane"/>
    <property type="evidence" value="ECO:0007669"/>
    <property type="project" value="UniProtKB-SubCell"/>
</dbReference>
<dbReference type="GO" id="GO:0004966">
    <property type="term" value="F:galanin receptor activity"/>
    <property type="evidence" value="ECO:0000250"/>
    <property type="project" value="UniProtKB"/>
</dbReference>
<dbReference type="GO" id="GO:0017046">
    <property type="term" value="F:peptide hormone binding"/>
    <property type="evidence" value="ECO:0000250"/>
    <property type="project" value="UniProtKB"/>
</dbReference>
<dbReference type="GO" id="GO:0007187">
    <property type="term" value="P:G protein-coupled receptor signaling pathway, coupled to cyclic nucleotide second messenger"/>
    <property type="evidence" value="ECO:0007669"/>
    <property type="project" value="Ensembl"/>
</dbReference>
<dbReference type="GO" id="GO:0090663">
    <property type="term" value="P:galanin-activated signaling pathway"/>
    <property type="evidence" value="ECO:0007669"/>
    <property type="project" value="Ensembl"/>
</dbReference>
<dbReference type="GO" id="GO:0045944">
    <property type="term" value="P:positive regulation of transcription by RNA polymerase II"/>
    <property type="evidence" value="ECO:0000250"/>
    <property type="project" value="UniProtKB"/>
</dbReference>
<dbReference type="FunFam" id="1.20.1070.10:FF:000244">
    <property type="entry name" value="galanin receptor type 3"/>
    <property type="match status" value="1"/>
</dbReference>
<dbReference type="Gene3D" id="1.20.1070.10">
    <property type="entry name" value="Rhodopsin 7-helix transmembrane proteins"/>
    <property type="match status" value="1"/>
</dbReference>
<dbReference type="InterPro" id="IPR000405">
    <property type="entry name" value="Galanin_rcpt"/>
</dbReference>
<dbReference type="InterPro" id="IPR003908">
    <property type="entry name" value="Galnin_3_rcpt"/>
</dbReference>
<dbReference type="InterPro" id="IPR000276">
    <property type="entry name" value="GPCR_Rhodpsn"/>
</dbReference>
<dbReference type="InterPro" id="IPR017452">
    <property type="entry name" value="GPCR_Rhodpsn_7TM"/>
</dbReference>
<dbReference type="PANTHER" id="PTHR45695:SF33">
    <property type="entry name" value="GALANIN RECEPTOR 3"/>
    <property type="match status" value="1"/>
</dbReference>
<dbReference type="PANTHER" id="PTHR45695">
    <property type="entry name" value="LEUCOKININ RECEPTOR-RELATED"/>
    <property type="match status" value="1"/>
</dbReference>
<dbReference type="Pfam" id="PF00001">
    <property type="entry name" value="7tm_1"/>
    <property type="match status" value="1"/>
</dbReference>
<dbReference type="PRINTS" id="PR01420">
    <property type="entry name" value="GALANIN3R"/>
</dbReference>
<dbReference type="PRINTS" id="PR00663">
    <property type="entry name" value="GALANINR"/>
</dbReference>
<dbReference type="PRINTS" id="PR00237">
    <property type="entry name" value="GPCRRHODOPSN"/>
</dbReference>
<dbReference type="SUPFAM" id="SSF81321">
    <property type="entry name" value="Family A G protein-coupled receptor-like"/>
    <property type="match status" value="1"/>
</dbReference>
<dbReference type="PROSITE" id="PS00237">
    <property type="entry name" value="G_PROTEIN_RECEP_F1_1"/>
    <property type="match status" value="1"/>
</dbReference>
<dbReference type="PROSITE" id="PS50262">
    <property type="entry name" value="G_PROTEIN_RECEP_F1_2"/>
    <property type="match status" value="1"/>
</dbReference>
<reference key="1">
    <citation type="submission" date="1998-01" db="EMBL/GenBank/DDBJ databases">
        <authorList>
            <person name="Kolakowski L.F. Jr."/>
            <person name="O'Neill G.P."/>
            <person name="Howard A.D."/>
            <person name="Broussard S.R."/>
            <person name="Sullivan K.A."/>
            <person name="Feighner S.D."/>
            <person name="Sawzdargo M."/>
            <person name="Nguyen T."/>
            <person name="Kargman S."/>
            <person name="Shiao L.-L."/>
            <person name="Hreniuk D.L."/>
            <person name="Tan C.P."/>
            <person name="Evans J."/>
            <person name="Abramovitz M."/>
            <person name="Chateauneuf A."/>
            <person name="Coulombe N."/>
            <person name="Ng G."/>
            <person name="Johnson M.P."/>
            <person name="Tharian A."/>
            <person name="Khoshbouei H."/>
            <person name="George S.R."/>
            <person name="Smith R.G."/>
            <person name="O'Dowd B.F."/>
        </authorList>
    </citation>
    <scope>NUCLEOTIDE SEQUENCE [GENOMIC DNA]</scope>
    <source>
        <strain>129/Sv</strain>
    </source>
</reference>
<reference key="2">
    <citation type="journal article" date="2009" name="PLoS Biol.">
        <title>Lineage-specific biology revealed by a finished genome assembly of the mouse.</title>
        <authorList>
            <person name="Church D.M."/>
            <person name="Goodstadt L."/>
            <person name="Hillier L.W."/>
            <person name="Zody M.C."/>
            <person name="Goldstein S."/>
            <person name="She X."/>
            <person name="Bult C.J."/>
            <person name="Agarwala R."/>
            <person name="Cherry J.L."/>
            <person name="DiCuccio M."/>
            <person name="Hlavina W."/>
            <person name="Kapustin Y."/>
            <person name="Meric P."/>
            <person name="Maglott D."/>
            <person name="Birtle Z."/>
            <person name="Marques A.C."/>
            <person name="Graves T."/>
            <person name="Zhou S."/>
            <person name="Teague B."/>
            <person name="Potamousis K."/>
            <person name="Churas C."/>
            <person name="Place M."/>
            <person name="Herschleb J."/>
            <person name="Runnheim R."/>
            <person name="Forrest D."/>
            <person name="Amos-Landgraf J."/>
            <person name="Schwartz D.C."/>
            <person name="Cheng Z."/>
            <person name="Lindblad-Toh K."/>
            <person name="Eichler E.E."/>
            <person name="Ponting C.P."/>
        </authorList>
    </citation>
    <scope>NUCLEOTIDE SEQUENCE [LARGE SCALE GENOMIC DNA]</scope>
    <source>
        <strain>C57BL/6J</strain>
    </source>
</reference>
<reference key="3">
    <citation type="journal article" date="2004" name="Genome Res.">
        <title>The status, quality, and expansion of the NIH full-length cDNA project: the Mammalian Gene Collection (MGC).</title>
        <authorList>
            <consortium name="The MGC Project Team"/>
        </authorList>
    </citation>
    <scope>NUCLEOTIDE SEQUENCE [LARGE SCALE MRNA]</scope>
    <source>
        <tissue>Brain</tissue>
    </source>
</reference>
<sequence>MADIQNISLDSPGSVGAVAVPVVFALIFLLGMVGNGLVLAVLLQPGPSAWQEPGSTTDLFILNLAVADLCFILCCVPFQAAIYTLDAWLFGAFVCKTVHLLIYLTMYASSFTLAAVSVDRYLAVRHPLRSRALRTPRNARAAVGLVWLLAALFSAPYLSYYGTVRYGALELCVPAWEDARRRALDVATFAAGYLLPVTVVSLAYGRTLCFLWAAVGPAGAAAAEARRRATGRAGRAMLTVAALYALCWGPHHALILCFWYGRFAFSPATYACRLASHCLAYANSCLNPLVYSLASRHFRARFRRLWPCGHRRHRHHHHRLHRALRRVQPASSGPAGYPGDARPRGWSMEPRGDALRGGETRLTLSARGPQ</sequence>
<evidence type="ECO:0000250" key="1"/>
<evidence type="ECO:0000250" key="2">
    <source>
        <dbReference type="UniProtKB" id="O60755"/>
    </source>
</evidence>
<evidence type="ECO:0000255" key="3"/>
<evidence type="ECO:0000255" key="4">
    <source>
        <dbReference type="PROSITE-ProRule" id="PRU00521"/>
    </source>
</evidence>
<evidence type="ECO:0000256" key="5">
    <source>
        <dbReference type="SAM" id="MobiDB-lite"/>
    </source>
</evidence>
<evidence type="ECO:0000305" key="6"/>